<organism>
    <name type="scientific">Salmonella typhi</name>
    <dbReference type="NCBI Taxonomy" id="90370"/>
    <lineage>
        <taxon>Bacteria</taxon>
        <taxon>Pseudomonadati</taxon>
        <taxon>Pseudomonadota</taxon>
        <taxon>Gammaproteobacteria</taxon>
        <taxon>Enterobacterales</taxon>
        <taxon>Enterobacteriaceae</taxon>
        <taxon>Salmonella</taxon>
    </lineage>
</organism>
<dbReference type="EC" id="2.9.1.3" evidence="1"/>
<dbReference type="EMBL" id="AL513382">
    <property type="protein sequence ID" value="CAD04998.1"/>
    <property type="molecule type" value="Genomic_DNA"/>
</dbReference>
<dbReference type="EMBL" id="AE014613">
    <property type="protein sequence ID" value="AAO69939.1"/>
    <property type="molecule type" value="Genomic_DNA"/>
</dbReference>
<dbReference type="RefSeq" id="NP_455108.1">
    <property type="nucleotide sequence ID" value="NC_003198.1"/>
</dbReference>
<dbReference type="SMR" id="Q8Z8R4"/>
<dbReference type="STRING" id="220341.gene:17584578"/>
<dbReference type="KEGG" id="stt:t2347"/>
<dbReference type="KEGG" id="sty:STY0561"/>
<dbReference type="PATRIC" id="fig|220341.7.peg.562"/>
<dbReference type="eggNOG" id="COG2603">
    <property type="taxonomic scope" value="Bacteria"/>
</dbReference>
<dbReference type="HOGENOM" id="CLU_043456_1_0_6"/>
<dbReference type="OMA" id="RPLVYCW"/>
<dbReference type="OrthoDB" id="9808735at2"/>
<dbReference type="Proteomes" id="UP000000541">
    <property type="component" value="Chromosome"/>
</dbReference>
<dbReference type="Proteomes" id="UP000002670">
    <property type="component" value="Chromosome"/>
</dbReference>
<dbReference type="GO" id="GO:0016765">
    <property type="term" value="F:transferase activity, transferring alkyl or aryl (other than methyl) groups"/>
    <property type="evidence" value="ECO:0007669"/>
    <property type="project" value="UniProtKB-UniRule"/>
</dbReference>
<dbReference type="GO" id="GO:0043828">
    <property type="term" value="F:tRNA 2-selenouridine synthase activity"/>
    <property type="evidence" value="ECO:0007669"/>
    <property type="project" value="UniProtKB-EC"/>
</dbReference>
<dbReference type="GO" id="GO:0002098">
    <property type="term" value="P:tRNA wobble uridine modification"/>
    <property type="evidence" value="ECO:0007669"/>
    <property type="project" value="UniProtKB-UniRule"/>
</dbReference>
<dbReference type="CDD" id="cd01520">
    <property type="entry name" value="RHOD_YbbB"/>
    <property type="match status" value="1"/>
</dbReference>
<dbReference type="FunFam" id="3.40.250.10:FF:000009">
    <property type="entry name" value="tRNA 2-selenouridine/geranyl-2-thiouridine synthase"/>
    <property type="match status" value="1"/>
</dbReference>
<dbReference type="Gene3D" id="3.40.250.10">
    <property type="entry name" value="Rhodanese-like domain"/>
    <property type="match status" value="1"/>
</dbReference>
<dbReference type="HAMAP" id="MF_01622">
    <property type="entry name" value="tRNA_sel_U_synth"/>
    <property type="match status" value="1"/>
</dbReference>
<dbReference type="InterPro" id="IPR001763">
    <property type="entry name" value="Rhodanese-like_dom"/>
</dbReference>
<dbReference type="InterPro" id="IPR036873">
    <property type="entry name" value="Rhodanese-like_dom_sf"/>
</dbReference>
<dbReference type="InterPro" id="IPR017582">
    <property type="entry name" value="SelU"/>
</dbReference>
<dbReference type="NCBIfam" id="NF008749">
    <property type="entry name" value="PRK11784.1-1"/>
    <property type="match status" value="1"/>
</dbReference>
<dbReference type="NCBIfam" id="NF008751">
    <property type="entry name" value="PRK11784.1-3"/>
    <property type="match status" value="1"/>
</dbReference>
<dbReference type="NCBIfam" id="TIGR03167">
    <property type="entry name" value="tRNA_sel_U_synt"/>
    <property type="match status" value="1"/>
</dbReference>
<dbReference type="PANTHER" id="PTHR30401">
    <property type="entry name" value="TRNA 2-SELENOURIDINE SYNTHASE"/>
    <property type="match status" value="1"/>
</dbReference>
<dbReference type="PANTHER" id="PTHR30401:SF0">
    <property type="entry name" value="TRNA 2-SELENOURIDINE SYNTHASE"/>
    <property type="match status" value="1"/>
</dbReference>
<dbReference type="Pfam" id="PF00581">
    <property type="entry name" value="Rhodanese"/>
    <property type="match status" value="1"/>
</dbReference>
<dbReference type="SMART" id="SM00450">
    <property type="entry name" value="RHOD"/>
    <property type="match status" value="1"/>
</dbReference>
<dbReference type="SUPFAM" id="SSF52821">
    <property type="entry name" value="Rhodanese/Cell cycle control phosphatase"/>
    <property type="match status" value="1"/>
</dbReference>
<dbReference type="PROSITE" id="PS50206">
    <property type="entry name" value="RHODANESE_3"/>
    <property type="match status" value="1"/>
</dbReference>
<sequence>MQDRQKAQDYRALLLADTPLIDVRAPIEFEQGAMPGAINLPLMMDDERAAVGTCYKRQGADAALALGHRLVCGDIRQQRLEAWKAAYQRFPNGYLCCARGGQRSHIVQRWLQETGIDCPLIEGGYKALRQTAIQATWQLAQKPILLIGGCTGSGKTQLVRQQPNGVDLEGLARHRGSSFGRTLKPQLSQASFENKLAVELLKINARQTLKRWVLEDEGRTIGANHLPECLRERMAQAPIAVVEDPFALRLERLREEYFIRMHHDFTHAYGDGAGWQAYSEYLHHGLFAIRRRLGLQRFAELTDTLDRALAEQLSSGSTDGHMAWLVPLLNEYYDPMYRYQLEKKAANIVFRGTWQDVANWLKAQ</sequence>
<gene>
    <name evidence="1" type="primary">selU</name>
    <name type="ordered locus">STY0561</name>
    <name type="ordered locus">t2347</name>
</gene>
<reference key="1">
    <citation type="journal article" date="2001" name="Nature">
        <title>Complete genome sequence of a multiple drug resistant Salmonella enterica serovar Typhi CT18.</title>
        <authorList>
            <person name="Parkhill J."/>
            <person name="Dougan G."/>
            <person name="James K.D."/>
            <person name="Thomson N.R."/>
            <person name="Pickard D."/>
            <person name="Wain J."/>
            <person name="Churcher C.M."/>
            <person name="Mungall K.L."/>
            <person name="Bentley S.D."/>
            <person name="Holden M.T.G."/>
            <person name="Sebaihia M."/>
            <person name="Baker S."/>
            <person name="Basham D."/>
            <person name="Brooks K."/>
            <person name="Chillingworth T."/>
            <person name="Connerton P."/>
            <person name="Cronin A."/>
            <person name="Davis P."/>
            <person name="Davies R.M."/>
            <person name="Dowd L."/>
            <person name="White N."/>
            <person name="Farrar J."/>
            <person name="Feltwell T."/>
            <person name="Hamlin N."/>
            <person name="Haque A."/>
            <person name="Hien T.T."/>
            <person name="Holroyd S."/>
            <person name="Jagels K."/>
            <person name="Krogh A."/>
            <person name="Larsen T.S."/>
            <person name="Leather S."/>
            <person name="Moule S."/>
            <person name="O'Gaora P."/>
            <person name="Parry C."/>
            <person name="Quail M.A."/>
            <person name="Rutherford K.M."/>
            <person name="Simmonds M."/>
            <person name="Skelton J."/>
            <person name="Stevens K."/>
            <person name="Whitehead S."/>
            <person name="Barrell B.G."/>
        </authorList>
    </citation>
    <scope>NUCLEOTIDE SEQUENCE [LARGE SCALE GENOMIC DNA]</scope>
    <source>
        <strain>CT18</strain>
    </source>
</reference>
<reference key="2">
    <citation type="journal article" date="2003" name="J. Bacteriol.">
        <title>Comparative genomics of Salmonella enterica serovar Typhi strains Ty2 and CT18.</title>
        <authorList>
            <person name="Deng W."/>
            <person name="Liou S.-R."/>
            <person name="Plunkett G. III"/>
            <person name="Mayhew G.F."/>
            <person name="Rose D.J."/>
            <person name="Burland V."/>
            <person name="Kodoyianni V."/>
            <person name="Schwartz D.C."/>
            <person name="Blattner F.R."/>
        </authorList>
    </citation>
    <scope>NUCLEOTIDE SEQUENCE [LARGE SCALE GENOMIC DNA]</scope>
    <source>
        <strain>ATCC 700931 / Ty2</strain>
    </source>
</reference>
<name>SELU_SALTI</name>
<feature type="chain" id="PRO_0000210874" description="tRNA 2-selenouridine synthase">
    <location>
        <begin position="1"/>
        <end position="364"/>
    </location>
</feature>
<feature type="domain" description="Rhodanese" evidence="1">
    <location>
        <begin position="14"/>
        <end position="137"/>
    </location>
</feature>
<feature type="active site" description="S-selanylcysteine intermediate" evidence="1">
    <location>
        <position position="97"/>
    </location>
</feature>
<keyword id="KW-0711">Selenium</keyword>
<keyword id="KW-0808">Transferase</keyword>
<protein>
    <recommendedName>
        <fullName evidence="1">tRNA 2-selenouridine synthase</fullName>
        <ecNumber evidence="1">2.9.1.3</ecNumber>
    </recommendedName>
</protein>
<accession>Q8Z8R4</accession>
<accession>Q7C8C6</accession>
<proteinExistence type="inferred from homology"/>
<evidence type="ECO:0000255" key="1">
    <source>
        <dbReference type="HAMAP-Rule" id="MF_01622"/>
    </source>
</evidence>
<comment type="function">
    <text evidence="1">Involved in the post-transcriptional modification of the uridine at the wobble position (U34) of tRNA(Lys), tRNA(Glu) and tRNA(Gln). Catalyzes the conversion of 2-thiouridine (S2U-RNA) to 2-selenouridine (Se2U-RNA). Acts in a two-step process involving geranylation of 2-thiouridine (S2U) to S-geranyl-2-thiouridine (geS2U) and subsequent selenation of the latter derivative to 2-selenouridine (Se2U) in the tRNA chain.</text>
</comment>
<comment type="catalytic activity">
    <reaction evidence="1">
        <text>5-methylaminomethyl-2-thiouridine(34) in tRNA + selenophosphate + (2E)-geranyl diphosphate + H2O + H(+) = 5-methylaminomethyl-2-selenouridine(34) in tRNA + (2E)-thiogeraniol + phosphate + diphosphate</text>
        <dbReference type="Rhea" id="RHEA:42716"/>
        <dbReference type="Rhea" id="RHEA-COMP:10195"/>
        <dbReference type="Rhea" id="RHEA-COMP:10196"/>
        <dbReference type="ChEBI" id="CHEBI:15377"/>
        <dbReference type="ChEBI" id="CHEBI:15378"/>
        <dbReference type="ChEBI" id="CHEBI:16144"/>
        <dbReference type="ChEBI" id="CHEBI:33019"/>
        <dbReference type="ChEBI" id="CHEBI:43474"/>
        <dbReference type="ChEBI" id="CHEBI:58057"/>
        <dbReference type="ChEBI" id="CHEBI:74455"/>
        <dbReference type="ChEBI" id="CHEBI:82743"/>
        <dbReference type="ChEBI" id="CHEBI:143703"/>
        <dbReference type="EC" id="2.9.1.3"/>
    </reaction>
    <physiologicalReaction direction="left-to-right" evidence="1">
        <dbReference type="Rhea" id="RHEA:42717"/>
    </physiologicalReaction>
</comment>
<comment type="catalytic activity">
    <reaction evidence="1">
        <text>5-methylaminomethyl-2-thiouridine(34) in tRNA + (2E)-geranyl diphosphate = 5-methylaminomethyl-S-(2E)-geranyl-thiouridine(34) in tRNA + diphosphate</text>
        <dbReference type="Rhea" id="RHEA:14085"/>
        <dbReference type="Rhea" id="RHEA-COMP:10195"/>
        <dbReference type="Rhea" id="RHEA-COMP:14654"/>
        <dbReference type="ChEBI" id="CHEBI:33019"/>
        <dbReference type="ChEBI" id="CHEBI:58057"/>
        <dbReference type="ChEBI" id="CHEBI:74455"/>
        <dbReference type="ChEBI" id="CHEBI:140632"/>
    </reaction>
    <physiologicalReaction direction="left-to-right" evidence="1">
        <dbReference type="Rhea" id="RHEA:14086"/>
    </physiologicalReaction>
</comment>
<comment type="catalytic activity">
    <reaction evidence="1">
        <text>5-methylaminomethyl-S-(2E)-geranyl-thiouridine(34) in tRNA + selenophosphate + H(+) = 5-methylaminomethyl-2-(Se-phospho)selenouridine(34) in tRNA + (2E)-thiogeraniol</text>
        <dbReference type="Rhea" id="RHEA:60172"/>
        <dbReference type="Rhea" id="RHEA-COMP:14654"/>
        <dbReference type="Rhea" id="RHEA-COMP:15523"/>
        <dbReference type="ChEBI" id="CHEBI:15378"/>
        <dbReference type="ChEBI" id="CHEBI:16144"/>
        <dbReference type="ChEBI" id="CHEBI:140632"/>
        <dbReference type="ChEBI" id="CHEBI:143702"/>
        <dbReference type="ChEBI" id="CHEBI:143703"/>
    </reaction>
    <physiologicalReaction direction="left-to-right" evidence="1">
        <dbReference type="Rhea" id="RHEA:60173"/>
    </physiologicalReaction>
</comment>
<comment type="catalytic activity">
    <reaction evidence="1">
        <text>5-methylaminomethyl-2-(Se-phospho)selenouridine(34) in tRNA + H2O = 5-methylaminomethyl-2-selenouridine(34) in tRNA + phosphate</text>
        <dbReference type="Rhea" id="RHEA:60176"/>
        <dbReference type="Rhea" id="RHEA-COMP:10196"/>
        <dbReference type="Rhea" id="RHEA-COMP:15523"/>
        <dbReference type="ChEBI" id="CHEBI:15377"/>
        <dbReference type="ChEBI" id="CHEBI:43474"/>
        <dbReference type="ChEBI" id="CHEBI:82743"/>
        <dbReference type="ChEBI" id="CHEBI:143702"/>
    </reaction>
    <physiologicalReaction direction="left-to-right" evidence="1">
        <dbReference type="Rhea" id="RHEA:60177"/>
    </physiologicalReaction>
</comment>
<comment type="subunit">
    <text evidence="1">Monomer.</text>
</comment>
<comment type="similarity">
    <text evidence="1">Belongs to the SelU family.</text>
</comment>